<keyword id="KW-0349">Heme</keyword>
<keyword id="KW-0408">Iron</keyword>
<keyword id="KW-0413">Isomerase</keyword>
<keyword id="KW-0479">Metal-binding</keyword>
<dbReference type="EC" id="5.99.-.-" evidence="1"/>
<dbReference type="EMBL" id="CP000325">
    <property type="protein sequence ID" value="ABL03139.1"/>
    <property type="molecule type" value="Genomic_DNA"/>
</dbReference>
<dbReference type="RefSeq" id="WP_011738764.1">
    <property type="nucleotide sequence ID" value="NC_008611.1"/>
</dbReference>
<dbReference type="SMR" id="A0PLC0"/>
<dbReference type="KEGG" id="mul:MUL_0429"/>
<dbReference type="eggNOG" id="COG4044">
    <property type="taxonomic scope" value="Bacteria"/>
</dbReference>
<dbReference type="HOGENOM" id="CLU_085483_0_0_11"/>
<dbReference type="Proteomes" id="UP000000765">
    <property type="component" value="Chromosome"/>
</dbReference>
<dbReference type="GO" id="GO:0020037">
    <property type="term" value="F:heme binding"/>
    <property type="evidence" value="ECO:0007669"/>
    <property type="project" value="UniProtKB-UniRule"/>
</dbReference>
<dbReference type="GO" id="GO:0046872">
    <property type="term" value="F:metal ion binding"/>
    <property type="evidence" value="ECO:0007669"/>
    <property type="project" value="UniProtKB-KW"/>
</dbReference>
<dbReference type="GO" id="GO:0062213">
    <property type="term" value="F:peroxynitrite isomerase activity"/>
    <property type="evidence" value="ECO:0007669"/>
    <property type="project" value="UniProtKB-UniRule"/>
</dbReference>
<dbReference type="CDD" id="cd07828">
    <property type="entry name" value="lipocalin_heme-bd-THAP4-like"/>
    <property type="match status" value="1"/>
</dbReference>
<dbReference type="Gene3D" id="2.40.128.20">
    <property type="match status" value="1"/>
</dbReference>
<dbReference type="HAMAP" id="MF_01297">
    <property type="entry name" value="nitrobindin"/>
    <property type="match status" value="1"/>
</dbReference>
<dbReference type="InterPro" id="IPR012674">
    <property type="entry name" value="Calycin"/>
</dbReference>
<dbReference type="InterPro" id="IPR022939">
    <property type="entry name" value="Nb(III)_bact/plant"/>
</dbReference>
<dbReference type="InterPro" id="IPR045165">
    <property type="entry name" value="Nitrobindin"/>
</dbReference>
<dbReference type="InterPro" id="IPR014878">
    <property type="entry name" value="THAP4-like_heme-bd"/>
</dbReference>
<dbReference type="PANTHER" id="PTHR15854:SF4">
    <property type="entry name" value="PEROXYNITRITE ISOMERASE THAP4"/>
    <property type="match status" value="1"/>
</dbReference>
<dbReference type="PANTHER" id="PTHR15854">
    <property type="entry name" value="THAP4 PROTEIN"/>
    <property type="match status" value="1"/>
</dbReference>
<dbReference type="Pfam" id="PF08768">
    <property type="entry name" value="THAP4_heme-bd"/>
    <property type="match status" value="1"/>
</dbReference>
<dbReference type="SUPFAM" id="SSF50814">
    <property type="entry name" value="Lipocalins"/>
    <property type="match status" value="1"/>
</dbReference>
<proteinExistence type="inferred from homology"/>
<comment type="function">
    <text evidence="1">Heme-binding protein able to scavenge peroxynitrite and to protect free L-tyrosine against peroxynitrite-mediated nitration, by acting as a peroxynitrite isomerase that converts peroxynitrite to nitrate. Therefore, this protein likely plays a role in peroxynitrite sensing and in the detoxification of reactive nitrogen and oxygen species (RNS and ROS, respectively). Is able to bind nitric oxide (NO) in vitro, but may act as a sensor of peroxynitrite levels in vivo.</text>
</comment>
<comment type="catalytic activity">
    <reaction evidence="1">
        <text>peroxynitrite = nitrate</text>
        <dbReference type="Rhea" id="RHEA:63116"/>
        <dbReference type="ChEBI" id="CHEBI:17632"/>
        <dbReference type="ChEBI" id="CHEBI:25941"/>
    </reaction>
    <physiologicalReaction direction="left-to-right" evidence="1">
        <dbReference type="Rhea" id="RHEA:63117"/>
    </physiologicalReaction>
</comment>
<comment type="cofactor">
    <cofactor evidence="1">
        <name>heme b</name>
        <dbReference type="ChEBI" id="CHEBI:60344"/>
    </cofactor>
    <text evidence="1">Binds 1 heme b group per subunit, that coordinates a highly solvent-exposed Fe(III) atom.</text>
</comment>
<comment type="pathway">
    <text evidence="1">Nitrogen metabolism.</text>
</comment>
<comment type="subunit">
    <text evidence="1">Homodimer.</text>
</comment>
<comment type="domain">
    <text evidence="1">Forms a 10-stranded antiparallel beta-barrel structure able to accommodate a hydrophobic ligand in its interior. In fact, this fold hosts the heme group, which is located in a wide surface cleft.</text>
</comment>
<comment type="similarity">
    <text evidence="1">Belongs to the nitrobindin family.</text>
</comment>
<name>NB1_MYCUA</name>
<accession>A0PLC0</accession>
<sequence length="194" mass="21303">MTAARNIPTFDDLPLPADTANLRHGANLHDALLALLPLVGVWRGEGEGRGPHGDYRFGQQIVVSHDGGDYLNWEARSWRLDEDGQYEEPGLRETGFWRFVSDPEDDPSESQAIELLLAHSAGYVELFYGRPLTQSSWELVTDALARSRSGVLVGGAKRLYGIIEGGDLAYVEERVDADGGLVPHLSARLSRYAG</sequence>
<gene>
    <name type="ordered locus">MUL_0429</name>
</gene>
<reference key="1">
    <citation type="journal article" date="2007" name="Genome Res.">
        <title>Reductive evolution and niche adaptation inferred from the genome of Mycobacterium ulcerans, the causative agent of Buruli ulcer.</title>
        <authorList>
            <person name="Stinear T.P."/>
            <person name="Seemann T."/>
            <person name="Pidot S."/>
            <person name="Frigui W."/>
            <person name="Reysset G."/>
            <person name="Garnier T."/>
            <person name="Meurice G."/>
            <person name="Simon D."/>
            <person name="Bouchier C."/>
            <person name="Ma L."/>
            <person name="Tichit M."/>
            <person name="Porter J.L."/>
            <person name="Ryan J."/>
            <person name="Johnson P.D.R."/>
            <person name="Davies J.K."/>
            <person name="Jenkin G.A."/>
            <person name="Small P.L.C."/>
            <person name="Jones L.M."/>
            <person name="Tekaia F."/>
            <person name="Laval F."/>
            <person name="Daffe M."/>
            <person name="Parkhill J."/>
            <person name="Cole S.T."/>
        </authorList>
    </citation>
    <scope>NUCLEOTIDE SEQUENCE [LARGE SCALE GENOMIC DNA]</scope>
    <source>
        <strain>Agy99</strain>
    </source>
</reference>
<protein>
    <recommendedName>
        <fullName>Peroxynitrite isomerase 1</fullName>
        <ecNumber evidence="1">5.99.-.-</ecNumber>
    </recommendedName>
    <alternativeName>
        <fullName>Ferric nitrobindin</fullName>
        <shortName>Nb(III)</shortName>
    </alternativeName>
</protein>
<feature type="chain" id="PRO_0000356937" description="Peroxynitrite isomerase 1">
    <location>
        <begin position="1"/>
        <end position="194"/>
    </location>
</feature>
<feature type="short sequence motif" description="GXWXGXG" evidence="1">
    <location>
        <begin position="40"/>
        <end position="46"/>
    </location>
</feature>
<feature type="binding site" evidence="1">
    <location>
        <position position="157"/>
    </location>
    <ligand>
        <name>heme b</name>
        <dbReference type="ChEBI" id="CHEBI:60344"/>
    </ligand>
</feature>
<feature type="binding site" description="axial binding residue" evidence="1">
    <location>
        <position position="184"/>
    </location>
    <ligand>
        <name>heme b</name>
        <dbReference type="ChEBI" id="CHEBI:60344"/>
    </ligand>
    <ligandPart>
        <name>Fe</name>
        <dbReference type="ChEBI" id="CHEBI:18248"/>
    </ligandPart>
</feature>
<evidence type="ECO:0000255" key="1">
    <source>
        <dbReference type="HAMAP-Rule" id="MF_01297"/>
    </source>
</evidence>
<organism>
    <name type="scientific">Mycobacterium ulcerans (strain Agy99)</name>
    <dbReference type="NCBI Taxonomy" id="362242"/>
    <lineage>
        <taxon>Bacteria</taxon>
        <taxon>Bacillati</taxon>
        <taxon>Actinomycetota</taxon>
        <taxon>Actinomycetes</taxon>
        <taxon>Mycobacteriales</taxon>
        <taxon>Mycobacteriaceae</taxon>
        <taxon>Mycobacterium</taxon>
        <taxon>Mycobacterium ulcerans group</taxon>
    </lineage>
</organism>